<proteinExistence type="inferred from homology"/>
<organism>
    <name type="scientific">Salmonella typhi</name>
    <dbReference type="NCBI Taxonomy" id="90370"/>
    <lineage>
        <taxon>Bacteria</taxon>
        <taxon>Pseudomonadati</taxon>
        <taxon>Pseudomonadota</taxon>
        <taxon>Gammaproteobacteria</taxon>
        <taxon>Enterobacterales</taxon>
        <taxon>Enterobacteriaceae</taxon>
        <taxon>Salmonella</taxon>
    </lineage>
</organism>
<name>HIUH_SALTI</name>
<comment type="function">
    <text evidence="1">Catalyzes the hydrolysis of 5-hydroxyisourate (HIU) to 2-oxo-4-hydroxy-4-carboxy-5-ureidoimidazoline (OHCU).</text>
</comment>
<comment type="catalytic activity">
    <reaction>
        <text>5-hydroxyisourate + H2O = 5-hydroxy-2-oxo-4-ureido-2,5-dihydro-1H-imidazole-5-carboxylate + H(+)</text>
        <dbReference type="Rhea" id="RHEA:23736"/>
        <dbReference type="ChEBI" id="CHEBI:15377"/>
        <dbReference type="ChEBI" id="CHEBI:15378"/>
        <dbReference type="ChEBI" id="CHEBI:18072"/>
        <dbReference type="ChEBI" id="CHEBI:58639"/>
        <dbReference type="EC" id="3.5.2.17"/>
    </reaction>
</comment>
<comment type="subunit">
    <text evidence="1">Homotetramer.</text>
</comment>
<comment type="subcellular location">
    <subcellularLocation>
        <location evidence="1">Periplasm</location>
    </subcellularLocation>
</comment>
<comment type="miscellaneous">
    <text>HIU hydrolysis also occurs spontaneously, but more slowly.</text>
</comment>
<comment type="similarity">
    <text evidence="3">Belongs to the transthyretin family. 5-hydroxyisourate hydrolase subfamily.</text>
</comment>
<keyword id="KW-0378">Hydrolase</keyword>
<keyword id="KW-0574">Periplasm</keyword>
<keyword id="KW-0659">Purine metabolism</keyword>
<keyword id="KW-0732">Signal</keyword>
<feature type="signal peptide" evidence="2">
    <location>
        <begin position="1"/>
        <end position="20"/>
    </location>
</feature>
<feature type="chain" id="PRO_0000035774" description="5-hydroxyisourate hydrolase">
    <location>
        <begin position="21"/>
        <end position="136"/>
    </location>
</feature>
<feature type="binding site" evidence="1">
    <location>
        <position position="31"/>
    </location>
    <ligand>
        <name>substrate</name>
    </ligand>
</feature>
<feature type="binding site" evidence="1">
    <location>
        <position position="69"/>
    </location>
    <ligand>
        <name>substrate</name>
    </ligand>
</feature>
<feature type="binding site" evidence="1">
    <location>
        <position position="133"/>
    </location>
    <ligand>
        <name>substrate</name>
    </ligand>
</feature>
<dbReference type="EC" id="3.5.2.17"/>
<dbReference type="EMBL" id="AL513382">
    <property type="protein sequence ID" value="CAD08223.1"/>
    <property type="molecule type" value="Genomic_DNA"/>
</dbReference>
<dbReference type="EMBL" id="AE014613">
    <property type="protein sequence ID" value="AAO69443.1"/>
    <property type="molecule type" value="Genomic_DNA"/>
</dbReference>
<dbReference type="RefSeq" id="NP_455594.1">
    <property type="nucleotide sequence ID" value="NC_003198.1"/>
</dbReference>
<dbReference type="RefSeq" id="WP_000833187.1">
    <property type="nucleotide sequence ID" value="NZ_WSUR01000018.1"/>
</dbReference>
<dbReference type="SMR" id="Q8Z7Q6"/>
<dbReference type="STRING" id="220341.gene:17585102"/>
<dbReference type="KEGG" id="stt:t1822"/>
<dbReference type="KEGG" id="sty:STY1129"/>
<dbReference type="PATRIC" id="fig|220341.7.peg.1130"/>
<dbReference type="eggNOG" id="COG2351">
    <property type="taxonomic scope" value="Bacteria"/>
</dbReference>
<dbReference type="HOGENOM" id="CLU_115536_3_0_6"/>
<dbReference type="OMA" id="CSENQNY"/>
<dbReference type="OrthoDB" id="9792386at2"/>
<dbReference type="Proteomes" id="UP000000541">
    <property type="component" value="Chromosome"/>
</dbReference>
<dbReference type="Proteomes" id="UP000002670">
    <property type="component" value="Chromosome"/>
</dbReference>
<dbReference type="GO" id="GO:0042597">
    <property type="term" value="C:periplasmic space"/>
    <property type="evidence" value="ECO:0007669"/>
    <property type="project" value="UniProtKB-SubCell"/>
</dbReference>
<dbReference type="GO" id="GO:0033971">
    <property type="term" value="F:hydroxyisourate hydrolase activity"/>
    <property type="evidence" value="ECO:0007669"/>
    <property type="project" value="UniProtKB-EC"/>
</dbReference>
<dbReference type="GO" id="GO:0006144">
    <property type="term" value="P:purine nucleobase metabolic process"/>
    <property type="evidence" value="ECO:0007669"/>
    <property type="project" value="UniProtKB-KW"/>
</dbReference>
<dbReference type="CDD" id="cd05822">
    <property type="entry name" value="TLP_HIUase"/>
    <property type="match status" value="1"/>
</dbReference>
<dbReference type="FunFam" id="2.60.40.180:FF:000001">
    <property type="entry name" value="5-hydroxyisourate hydrolase"/>
    <property type="match status" value="1"/>
</dbReference>
<dbReference type="Gene3D" id="2.60.40.180">
    <property type="entry name" value="Transthyretin/hydroxyisourate hydrolase domain"/>
    <property type="match status" value="1"/>
</dbReference>
<dbReference type="InterPro" id="IPR014306">
    <property type="entry name" value="Hydroxyisourate_hydrolase"/>
</dbReference>
<dbReference type="InterPro" id="IPR023418">
    <property type="entry name" value="Thyroxine_BS"/>
</dbReference>
<dbReference type="InterPro" id="IPR000895">
    <property type="entry name" value="Transthyretin/HIU_hydrolase"/>
</dbReference>
<dbReference type="InterPro" id="IPR023416">
    <property type="entry name" value="Transthyretin/HIU_hydrolase_d"/>
</dbReference>
<dbReference type="InterPro" id="IPR036817">
    <property type="entry name" value="Transthyretin/HIU_hydrolase_sf"/>
</dbReference>
<dbReference type="InterPro" id="IPR023419">
    <property type="entry name" value="Transthyretin_CS"/>
</dbReference>
<dbReference type="NCBIfam" id="TIGR02962">
    <property type="entry name" value="hdxy_isourate"/>
    <property type="match status" value="1"/>
</dbReference>
<dbReference type="NCBIfam" id="NF011610">
    <property type="entry name" value="PRK15036.1"/>
    <property type="match status" value="1"/>
</dbReference>
<dbReference type="PANTHER" id="PTHR10395:SF7">
    <property type="entry name" value="5-HYDROXYISOURATE HYDROLASE"/>
    <property type="match status" value="1"/>
</dbReference>
<dbReference type="PANTHER" id="PTHR10395">
    <property type="entry name" value="URICASE AND TRANSTHYRETIN-RELATED"/>
    <property type="match status" value="1"/>
</dbReference>
<dbReference type="Pfam" id="PF00576">
    <property type="entry name" value="Transthyretin"/>
    <property type="match status" value="1"/>
</dbReference>
<dbReference type="PRINTS" id="PR00189">
    <property type="entry name" value="TRNSTHYRETIN"/>
</dbReference>
<dbReference type="SMART" id="SM00095">
    <property type="entry name" value="TR_THY"/>
    <property type="match status" value="1"/>
</dbReference>
<dbReference type="SUPFAM" id="SSF49472">
    <property type="entry name" value="Transthyretin (synonym: prealbumin)"/>
    <property type="match status" value="1"/>
</dbReference>
<dbReference type="PROSITE" id="PS00768">
    <property type="entry name" value="TRANSTHYRETIN_1"/>
    <property type="match status" value="1"/>
</dbReference>
<dbReference type="PROSITE" id="PS00769">
    <property type="entry name" value="TRANSTHYRETIN_2"/>
    <property type="match status" value="1"/>
</dbReference>
<sequence>MKRYILATAIASLVAAPAMALAAGSNILSVHILDQQTGKPAPGVEVVLEQKKDNGWTQLNTGHTDQDGRIKALWPEKAAAPGDYRVIFKTGQYFESKKLDTFFPEIPVEFHISKTNEHYHVPLLLSQYGYSTYRGS</sequence>
<accession>Q8Z7Q6</accession>
<evidence type="ECO:0000250" key="1"/>
<evidence type="ECO:0000255" key="2"/>
<evidence type="ECO:0000305" key="3"/>
<protein>
    <recommendedName>
        <fullName>5-hydroxyisourate hydrolase</fullName>
        <shortName>HIU hydrolase</shortName>
        <shortName>HIUHase</shortName>
        <ecNumber>3.5.2.17</ecNumber>
    </recommendedName>
    <alternativeName>
        <fullName>Transthyretin-like protein</fullName>
        <shortName>TLP</shortName>
    </alternativeName>
</protein>
<gene>
    <name type="primary">hiuH</name>
    <name type="ordered locus">STY1129</name>
    <name type="ordered locus">t1822</name>
</gene>
<reference key="1">
    <citation type="journal article" date="2001" name="Nature">
        <title>Complete genome sequence of a multiple drug resistant Salmonella enterica serovar Typhi CT18.</title>
        <authorList>
            <person name="Parkhill J."/>
            <person name="Dougan G."/>
            <person name="James K.D."/>
            <person name="Thomson N.R."/>
            <person name="Pickard D."/>
            <person name="Wain J."/>
            <person name="Churcher C.M."/>
            <person name="Mungall K.L."/>
            <person name="Bentley S.D."/>
            <person name="Holden M.T.G."/>
            <person name="Sebaihia M."/>
            <person name="Baker S."/>
            <person name="Basham D."/>
            <person name="Brooks K."/>
            <person name="Chillingworth T."/>
            <person name="Connerton P."/>
            <person name="Cronin A."/>
            <person name="Davis P."/>
            <person name="Davies R.M."/>
            <person name="Dowd L."/>
            <person name="White N."/>
            <person name="Farrar J."/>
            <person name="Feltwell T."/>
            <person name="Hamlin N."/>
            <person name="Haque A."/>
            <person name="Hien T.T."/>
            <person name="Holroyd S."/>
            <person name="Jagels K."/>
            <person name="Krogh A."/>
            <person name="Larsen T.S."/>
            <person name="Leather S."/>
            <person name="Moule S."/>
            <person name="O'Gaora P."/>
            <person name="Parry C."/>
            <person name="Quail M.A."/>
            <person name="Rutherford K.M."/>
            <person name="Simmonds M."/>
            <person name="Skelton J."/>
            <person name="Stevens K."/>
            <person name="Whitehead S."/>
            <person name="Barrell B.G."/>
        </authorList>
    </citation>
    <scope>NUCLEOTIDE SEQUENCE [LARGE SCALE GENOMIC DNA]</scope>
    <source>
        <strain>CT18</strain>
    </source>
</reference>
<reference key="2">
    <citation type="journal article" date="2003" name="J. Bacteriol.">
        <title>Comparative genomics of Salmonella enterica serovar Typhi strains Ty2 and CT18.</title>
        <authorList>
            <person name="Deng W."/>
            <person name="Liou S.-R."/>
            <person name="Plunkett G. III"/>
            <person name="Mayhew G.F."/>
            <person name="Rose D.J."/>
            <person name="Burland V."/>
            <person name="Kodoyianni V."/>
            <person name="Schwartz D.C."/>
            <person name="Blattner F.R."/>
        </authorList>
    </citation>
    <scope>NUCLEOTIDE SEQUENCE [LARGE SCALE GENOMIC DNA]</scope>
    <source>
        <strain>ATCC 700931 / Ty2</strain>
    </source>
</reference>